<dbReference type="EMBL" id="BA000036">
    <property type="protein sequence ID" value="BAB97959.1"/>
    <property type="molecule type" value="Genomic_DNA"/>
</dbReference>
<dbReference type="EMBL" id="BX927149">
    <property type="protein sequence ID" value="CAF19271.1"/>
    <property type="molecule type" value="Genomic_DNA"/>
</dbReference>
<dbReference type="RefSeq" id="NP_599802.1">
    <property type="nucleotide sequence ID" value="NC_003450.3"/>
</dbReference>
<dbReference type="RefSeq" id="WP_011013732.1">
    <property type="nucleotide sequence ID" value="NC_006958.1"/>
</dbReference>
<dbReference type="SMR" id="Q8NSV1"/>
<dbReference type="STRING" id="196627.cg0656"/>
<dbReference type="GeneID" id="1018570"/>
<dbReference type="KEGG" id="cgb:cg0656"/>
<dbReference type="KEGG" id="cgl:Cgl0566"/>
<dbReference type="PATRIC" id="fig|196627.13.peg.557"/>
<dbReference type="eggNOG" id="COG0203">
    <property type="taxonomic scope" value="Bacteria"/>
</dbReference>
<dbReference type="HOGENOM" id="CLU_074407_0_0_11"/>
<dbReference type="OrthoDB" id="9809073at2"/>
<dbReference type="BioCyc" id="CORYNE:G18NG-10128-MONOMER"/>
<dbReference type="Proteomes" id="UP000000582">
    <property type="component" value="Chromosome"/>
</dbReference>
<dbReference type="Proteomes" id="UP000001009">
    <property type="component" value="Chromosome"/>
</dbReference>
<dbReference type="GO" id="GO:0022625">
    <property type="term" value="C:cytosolic large ribosomal subunit"/>
    <property type="evidence" value="ECO:0007669"/>
    <property type="project" value="TreeGrafter"/>
</dbReference>
<dbReference type="GO" id="GO:0003735">
    <property type="term" value="F:structural constituent of ribosome"/>
    <property type="evidence" value="ECO:0007669"/>
    <property type="project" value="InterPro"/>
</dbReference>
<dbReference type="GO" id="GO:0006412">
    <property type="term" value="P:translation"/>
    <property type="evidence" value="ECO:0007669"/>
    <property type="project" value="UniProtKB-UniRule"/>
</dbReference>
<dbReference type="FunFam" id="3.90.1030.10:FF:000001">
    <property type="entry name" value="50S ribosomal protein L17"/>
    <property type="match status" value="1"/>
</dbReference>
<dbReference type="Gene3D" id="3.90.1030.10">
    <property type="entry name" value="Ribosomal protein L17"/>
    <property type="match status" value="1"/>
</dbReference>
<dbReference type="HAMAP" id="MF_01368">
    <property type="entry name" value="Ribosomal_bL17"/>
    <property type="match status" value="1"/>
</dbReference>
<dbReference type="InterPro" id="IPR000456">
    <property type="entry name" value="Ribosomal_bL17"/>
</dbReference>
<dbReference type="InterPro" id="IPR047859">
    <property type="entry name" value="Ribosomal_bL17_CS"/>
</dbReference>
<dbReference type="InterPro" id="IPR036373">
    <property type="entry name" value="Ribosomal_bL17_sf"/>
</dbReference>
<dbReference type="NCBIfam" id="TIGR00059">
    <property type="entry name" value="L17"/>
    <property type="match status" value="1"/>
</dbReference>
<dbReference type="PANTHER" id="PTHR14413:SF16">
    <property type="entry name" value="LARGE RIBOSOMAL SUBUNIT PROTEIN BL17M"/>
    <property type="match status" value="1"/>
</dbReference>
<dbReference type="PANTHER" id="PTHR14413">
    <property type="entry name" value="RIBOSOMAL PROTEIN L17"/>
    <property type="match status" value="1"/>
</dbReference>
<dbReference type="Pfam" id="PF01196">
    <property type="entry name" value="Ribosomal_L17"/>
    <property type="match status" value="1"/>
</dbReference>
<dbReference type="SUPFAM" id="SSF64263">
    <property type="entry name" value="Prokaryotic ribosomal protein L17"/>
    <property type="match status" value="1"/>
</dbReference>
<dbReference type="PROSITE" id="PS01167">
    <property type="entry name" value="RIBOSOMAL_L17"/>
    <property type="match status" value="1"/>
</dbReference>
<gene>
    <name evidence="1" type="primary">rplQ</name>
    <name type="ordered locus">Cgl0566</name>
    <name type="ordered locus">cg0656</name>
</gene>
<name>RL17_CORGL</name>
<accession>Q8NSV1</accession>
<accession>Q6M7J4</accession>
<comment type="subunit">
    <text evidence="1">Part of the 50S ribosomal subunit. Contacts protein L32.</text>
</comment>
<comment type="similarity">
    <text evidence="1">Belongs to the bacterial ribosomal protein bL17 family.</text>
</comment>
<sequence length="163" mass="17518">MPTPKKGARLGGSASHQKKILSNLAASLFEHGAIKTTDAKAKALRPYAEKLITKAKSGSVADRRNVLALVPNKEIVAYLFNELAPKFENRPGGYTRIIKLENRKGDNAPMSQISLVLEETVSAEASRATRASASKKAAEEAETEEVVEAPAEETATEEAAEEK</sequence>
<proteinExistence type="inferred from homology"/>
<evidence type="ECO:0000255" key="1">
    <source>
        <dbReference type="HAMAP-Rule" id="MF_01368"/>
    </source>
</evidence>
<evidence type="ECO:0000256" key="2">
    <source>
        <dbReference type="SAM" id="MobiDB-lite"/>
    </source>
</evidence>
<evidence type="ECO:0000305" key="3"/>
<keyword id="KW-1185">Reference proteome</keyword>
<keyword id="KW-0687">Ribonucleoprotein</keyword>
<keyword id="KW-0689">Ribosomal protein</keyword>
<protein>
    <recommendedName>
        <fullName evidence="1">Large ribosomal subunit protein bL17</fullName>
    </recommendedName>
    <alternativeName>
        <fullName evidence="3">50S ribosomal protein L17</fullName>
    </alternativeName>
</protein>
<feature type="chain" id="PRO_1000055811" description="Large ribosomal subunit protein bL17">
    <location>
        <begin position="1"/>
        <end position="163"/>
    </location>
</feature>
<feature type="region of interest" description="Disordered" evidence="2">
    <location>
        <begin position="123"/>
        <end position="163"/>
    </location>
</feature>
<feature type="compositionally biased region" description="Low complexity" evidence="2">
    <location>
        <begin position="123"/>
        <end position="135"/>
    </location>
</feature>
<feature type="compositionally biased region" description="Acidic residues" evidence="2">
    <location>
        <begin position="140"/>
        <end position="163"/>
    </location>
</feature>
<organism>
    <name type="scientific">Corynebacterium glutamicum (strain ATCC 13032 / DSM 20300 / JCM 1318 / BCRC 11384 / CCUG 27702 / LMG 3730 / NBRC 12168 / NCIMB 10025 / NRRL B-2784 / 534)</name>
    <dbReference type="NCBI Taxonomy" id="196627"/>
    <lineage>
        <taxon>Bacteria</taxon>
        <taxon>Bacillati</taxon>
        <taxon>Actinomycetota</taxon>
        <taxon>Actinomycetes</taxon>
        <taxon>Mycobacteriales</taxon>
        <taxon>Corynebacteriaceae</taxon>
        <taxon>Corynebacterium</taxon>
    </lineage>
</organism>
<reference key="1">
    <citation type="journal article" date="2003" name="Appl. Microbiol. Biotechnol.">
        <title>The Corynebacterium glutamicum genome: features and impacts on biotechnological processes.</title>
        <authorList>
            <person name="Ikeda M."/>
            <person name="Nakagawa S."/>
        </authorList>
    </citation>
    <scope>NUCLEOTIDE SEQUENCE [LARGE SCALE GENOMIC DNA]</scope>
    <source>
        <strain>ATCC 13032 / DSM 20300 / JCM 1318 / BCRC 11384 / CCUG 27702 / LMG 3730 / NBRC 12168 / NCIMB 10025 / NRRL B-2784 / 534</strain>
    </source>
</reference>
<reference key="2">
    <citation type="journal article" date="2003" name="J. Biotechnol.">
        <title>The complete Corynebacterium glutamicum ATCC 13032 genome sequence and its impact on the production of L-aspartate-derived amino acids and vitamins.</title>
        <authorList>
            <person name="Kalinowski J."/>
            <person name="Bathe B."/>
            <person name="Bartels D."/>
            <person name="Bischoff N."/>
            <person name="Bott M."/>
            <person name="Burkovski A."/>
            <person name="Dusch N."/>
            <person name="Eggeling L."/>
            <person name="Eikmanns B.J."/>
            <person name="Gaigalat L."/>
            <person name="Goesmann A."/>
            <person name="Hartmann M."/>
            <person name="Huthmacher K."/>
            <person name="Kraemer R."/>
            <person name="Linke B."/>
            <person name="McHardy A.C."/>
            <person name="Meyer F."/>
            <person name="Moeckel B."/>
            <person name="Pfefferle W."/>
            <person name="Puehler A."/>
            <person name="Rey D.A."/>
            <person name="Rueckert C."/>
            <person name="Rupp O."/>
            <person name="Sahm H."/>
            <person name="Wendisch V.F."/>
            <person name="Wiegraebe I."/>
            <person name="Tauch A."/>
        </authorList>
    </citation>
    <scope>NUCLEOTIDE SEQUENCE [LARGE SCALE GENOMIC DNA]</scope>
    <source>
        <strain>ATCC 13032 / DSM 20300 / JCM 1318 / BCRC 11384 / CCUG 27702 / LMG 3730 / NBRC 12168 / NCIMB 10025 / NRRL B-2784 / 534</strain>
    </source>
</reference>